<evidence type="ECO:0000250" key="1">
    <source>
        <dbReference type="UniProtKB" id="P0CK21"/>
    </source>
</evidence>
<evidence type="ECO:0000255" key="2"/>
<evidence type="ECO:0000305" key="3"/>
<dbReference type="EMBL" id="M35027">
    <property type="status" value="NOT_ANNOTATED_CDS"/>
    <property type="molecule type" value="Genomic_DNA"/>
</dbReference>
<dbReference type="TCDB" id="1.G.11.1.1">
    <property type="family name" value="the poxvirus cell entry protein complex (pep-c) family"/>
</dbReference>
<dbReference type="Proteomes" id="UP000008269">
    <property type="component" value="Segment"/>
</dbReference>
<dbReference type="GO" id="GO:0016020">
    <property type="term" value="C:membrane"/>
    <property type="evidence" value="ECO:0007669"/>
    <property type="project" value="UniProtKB-KW"/>
</dbReference>
<dbReference type="GO" id="GO:0019031">
    <property type="term" value="C:viral envelope"/>
    <property type="evidence" value="ECO:0007669"/>
    <property type="project" value="UniProtKB-KW"/>
</dbReference>
<dbReference type="GO" id="GO:0055036">
    <property type="term" value="C:virion membrane"/>
    <property type="evidence" value="ECO:0007669"/>
    <property type="project" value="UniProtKB-SubCell"/>
</dbReference>
<dbReference type="GO" id="GO:0046718">
    <property type="term" value="P:symbiont entry into host cell"/>
    <property type="evidence" value="ECO:0007669"/>
    <property type="project" value="UniProtKB-KW"/>
</dbReference>
<feature type="chain" id="PRO_0000411967" description="Entry-fusion complex protein OPG076">
    <location>
        <begin position="1"/>
        <end position="35"/>
    </location>
</feature>
<feature type="transmembrane region" description="Helical" evidence="2">
    <location>
        <begin position="2"/>
        <end position="22"/>
    </location>
</feature>
<feature type="topological domain" description="Virion surface" evidence="2">
    <location>
        <begin position="23"/>
        <end position="35"/>
    </location>
</feature>
<reference key="1">
    <citation type="journal article" date="1990" name="Virology">
        <title>The complete DNA sequence of vaccinia virus.</title>
        <authorList>
            <person name="Goebel S.J."/>
            <person name="Johnson G.P."/>
            <person name="Perkus M.E."/>
            <person name="Davis S.W."/>
            <person name="Winslow J.P."/>
            <person name="Paoletti E."/>
        </authorList>
    </citation>
    <scope>NUCLEOTIDE SEQUENCE [LARGE SCALE GENOMIC DNA]</scope>
</reference>
<reference key="2">
    <citation type="journal article" date="1990" name="Virology">
        <title>Appendix to 'The complete DNA sequence of vaccinia virus'.</title>
        <authorList>
            <person name="Goebel S.J."/>
            <person name="Johnson G.P."/>
            <person name="Perkus M.E."/>
            <person name="Davis S.W."/>
            <person name="Winslow J.P."/>
            <person name="Paoletti E."/>
        </authorList>
    </citation>
    <scope>NUCLEOTIDE SEQUENCE [LARGE SCALE GENOMIC DNA]</scope>
</reference>
<sequence length="35" mass="4226">MLVVIMFFIAFAFCSWLSYSYLRPYISTKELNKSR</sequence>
<comment type="function">
    <text evidence="1">Component of the entry fusion complex (EFC), which consists of 11 proteins. During cell infection, this complex mediates entry of the virion core into the host cytoplasm by a two-step mechanism consisting of lipid mixing of the viral and cellular membranes and subsequent pore formation.</text>
</comment>
<comment type="subunit">
    <text evidence="1">Component of the entry fusion complex (EFC) composed of OPG053, OPG076, OPG086, OPG094, OPG095, OPG099, OPG107, OPG143, OPG104, OPG147 and OPG155. Except for OPG095 and OPG053, each of the EFC proteins is required for assembly or stability of the complex.</text>
</comment>
<comment type="subcellular location">
    <subcellularLocation>
        <location evidence="1">Virion membrane</location>
        <topology evidence="1">Single-pass membrane protein</topology>
    </subcellularLocation>
    <text evidence="1">Localizes in cytoplasmic virus factories. Component of the membrane of the mature virion.</text>
</comment>
<comment type="induction">
    <text evidence="1">Expressed in the intermediate phase of the viral replicative cycle.</text>
</comment>
<comment type="PTM">
    <text evidence="1">Unglycosylated because produced in viral factories instead of the classic ER -Golgi route.</text>
</comment>
<comment type="similarity">
    <text evidence="3">Belongs to the orthopoxvirus OPG076 family.</text>
</comment>
<proteinExistence type="inferred from homology"/>
<protein>
    <recommendedName>
        <fullName>Entry-fusion complex protein OPG076</fullName>
        <shortName>EFC protein OPG076</shortName>
    </recommendedName>
    <alternativeName>
        <fullName>Protein O3</fullName>
    </alternativeName>
</protein>
<keyword id="KW-0426">Late protein</keyword>
<keyword id="KW-0472">Membrane</keyword>
<keyword id="KW-1185">Reference proteome</keyword>
<keyword id="KW-0812">Transmembrane</keyword>
<keyword id="KW-1133">Transmembrane helix</keyword>
<keyword id="KW-0261">Viral envelope protein</keyword>
<keyword id="KW-1162">Viral penetration into host cytoplasm</keyword>
<keyword id="KW-0946">Virion</keyword>
<keyword id="KW-1160">Virus entry into host cell</keyword>
<organism>
    <name type="scientific">Vaccinia virus (strain Copenhagen)</name>
    <name type="common">VACV</name>
    <dbReference type="NCBI Taxonomy" id="10249"/>
    <lineage>
        <taxon>Viruses</taxon>
        <taxon>Varidnaviria</taxon>
        <taxon>Bamfordvirae</taxon>
        <taxon>Nucleocytoviricota</taxon>
        <taxon>Pokkesviricetes</taxon>
        <taxon>Chitovirales</taxon>
        <taxon>Poxviridae</taxon>
        <taxon>Chordopoxvirinae</taxon>
        <taxon>Orthopoxvirus</taxon>
        <taxon>Vaccinia virus</taxon>
    </lineage>
</organism>
<accession>P0CK22</accession>
<organismHost>
    <name type="scientific">Homo sapiens</name>
    <name type="common">Human</name>
    <dbReference type="NCBI Taxonomy" id="9606"/>
</organismHost>
<name>PG076_VACCC</name>
<gene>
    <name type="primary">OPG076</name>
    <name type="ORF">O3L</name>
</gene>